<evidence type="ECO:0000255" key="1">
    <source>
        <dbReference type="HAMAP-Rule" id="MF_00001"/>
    </source>
</evidence>
<name>PYRB_SACI3</name>
<accession>C3N688</accession>
<dbReference type="EC" id="2.1.3.2" evidence="1"/>
<dbReference type="EMBL" id="CP001401">
    <property type="protein sequence ID" value="ACP55513.1"/>
    <property type="molecule type" value="Genomic_DNA"/>
</dbReference>
<dbReference type="RefSeq" id="WP_012718907.1">
    <property type="nucleotide sequence ID" value="NC_012632.1"/>
</dbReference>
<dbReference type="SMR" id="C3N688"/>
<dbReference type="GeneID" id="7814624"/>
<dbReference type="KEGG" id="sim:M1627_1633"/>
<dbReference type="HOGENOM" id="CLU_043846_1_2_2"/>
<dbReference type="UniPathway" id="UPA00070">
    <property type="reaction ID" value="UER00116"/>
</dbReference>
<dbReference type="Proteomes" id="UP000002307">
    <property type="component" value="Chromosome"/>
</dbReference>
<dbReference type="GO" id="GO:0016597">
    <property type="term" value="F:amino acid binding"/>
    <property type="evidence" value="ECO:0007669"/>
    <property type="project" value="InterPro"/>
</dbReference>
<dbReference type="GO" id="GO:0004070">
    <property type="term" value="F:aspartate carbamoyltransferase activity"/>
    <property type="evidence" value="ECO:0007669"/>
    <property type="project" value="UniProtKB-UniRule"/>
</dbReference>
<dbReference type="GO" id="GO:0006207">
    <property type="term" value="P:'de novo' pyrimidine nucleobase biosynthetic process"/>
    <property type="evidence" value="ECO:0007669"/>
    <property type="project" value="InterPro"/>
</dbReference>
<dbReference type="GO" id="GO:0044205">
    <property type="term" value="P:'de novo' UMP biosynthetic process"/>
    <property type="evidence" value="ECO:0007669"/>
    <property type="project" value="UniProtKB-UniRule"/>
</dbReference>
<dbReference type="GO" id="GO:0006520">
    <property type="term" value="P:amino acid metabolic process"/>
    <property type="evidence" value="ECO:0007669"/>
    <property type="project" value="InterPro"/>
</dbReference>
<dbReference type="FunFam" id="3.40.50.1370:FF:000021">
    <property type="entry name" value="Aspartate carbamoyltransferase"/>
    <property type="match status" value="1"/>
</dbReference>
<dbReference type="Gene3D" id="3.40.50.1370">
    <property type="entry name" value="Aspartate/ornithine carbamoyltransferase"/>
    <property type="match status" value="2"/>
</dbReference>
<dbReference type="HAMAP" id="MF_00001">
    <property type="entry name" value="Asp_carb_tr"/>
    <property type="match status" value="1"/>
</dbReference>
<dbReference type="InterPro" id="IPR006132">
    <property type="entry name" value="Asp/Orn_carbamoyltranf_P-bd"/>
</dbReference>
<dbReference type="InterPro" id="IPR006130">
    <property type="entry name" value="Asp/Orn_carbamoylTrfase"/>
</dbReference>
<dbReference type="InterPro" id="IPR036901">
    <property type="entry name" value="Asp/Orn_carbamoylTrfase_sf"/>
</dbReference>
<dbReference type="InterPro" id="IPR002082">
    <property type="entry name" value="Asp_carbamoyltransf"/>
</dbReference>
<dbReference type="InterPro" id="IPR006131">
    <property type="entry name" value="Asp_carbamoyltransf_Asp/Orn-bd"/>
</dbReference>
<dbReference type="NCBIfam" id="TIGR00670">
    <property type="entry name" value="asp_carb_tr"/>
    <property type="match status" value="1"/>
</dbReference>
<dbReference type="NCBIfam" id="NF002032">
    <property type="entry name" value="PRK00856.1"/>
    <property type="match status" value="1"/>
</dbReference>
<dbReference type="PANTHER" id="PTHR45753:SF6">
    <property type="entry name" value="ASPARTATE CARBAMOYLTRANSFERASE"/>
    <property type="match status" value="1"/>
</dbReference>
<dbReference type="PANTHER" id="PTHR45753">
    <property type="entry name" value="ORNITHINE CARBAMOYLTRANSFERASE, MITOCHONDRIAL"/>
    <property type="match status" value="1"/>
</dbReference>
<dbReference type="Pfam" id="PF00185">
    <property type="entry name" value="OTCace"/>
    <property type="match status" value="1"/>
</dbReference>
<dbReference type="Pfam" id="PF02729">
    <property type="entry name" value="OTCace_N"/>
    <property type="match status" value="1"/>
</dbReference>
<dbReference type="PRINTS" id="PR00100">
    <property type="entry name" value="AOTCASE"/>
</dbReference>
<dbReference type="PRINTS" id="PR00101">
    <property type="entry name" value="ATCASE"/>
</dbReference>
<dbReference type="SUPFAM" id="SSF53671">
    <property type="entry name" value="Aspartate/ornithine carbamoyltransferase"/>
    <property type="match status" value="1"/>
</dbReference>
<dbReference type="PROSITE" id="PS00097">
    <property type="entry name" value="CARBAMOYLTRANSFERASE"/>
    <property type="match status" value="1"/>
</dbReference>
<sequence length="303" mass="34632">MRLRHVVSSLDLTRDDYFRIFELVDKFSNVKKLNYLSGKVVSLAFFEPSTRTAQSFHTAAIKLGADVIGFASEESTSIAKGENLADTIRMLNNYSNCIVMRHKFDGAALFASEISDIPIINAGDGKHEHPTQALIDLYTIYKVFGEIDGRTFGLLGDLKYARTVNSLLRALTRFKPKKVFLISPSQLKVRREILDGLNYPVIETENPYDVIQDIDVLYVTRIQKERFVDEVEYEKVKESYVVDLKLVNMMKKDGIILHPLPRVTEIDRKVDKTTNAKYFYQASLAVPVRMALFYEVLGERKDD</sequence>
<protein>
    <recommendedName>
        <fullName evidence="1">Aspartate carbamoyltransferase catalytic subunit</fullName>
        <ecNumber evidence="1">2.1.3.2</ecNumber>
    </recommendedName>
    <alternativeName>
        <fullName evidence="1">Aspartate transcarbamylase</fullName>
        <shortName evidence="1">ATCase</shortName>
    </alternativeName>
</protein>
<proteinExistence type="inferred from homology"/>
<reference key="1">
    <citation type="journal article" date="2009" name="Proc. Natl. Acad. Sci. U.S.A.">
        <title>Biogeography of the Sulfolobus islandicus pan-genome.</title>
        <authorList>
            <person name="Reno M.L."/>
            <person name="Held N.L."/>
            <person name="Fields C.J."/>
            <person name="Burke P.V."/>
            <person name="Whitaker R.J."/>
        </authorList>
    </citation>
    <scope>NUCLEOTIDE SEQUENCE [LARGE SCALE GENOMIC DNA]</scope>
    <source>
        <strain>M.16.27</strain>
    </source>
</reference>
<gene>
    <name evidence="1" type="primary">pyrB</name>
    <name type="ordered locus">M1627_1633</name>
</gene>
<keyword id="KW-0665">Pyrimidine biosynthesis</keyword>
<keyword id="KW-0808">Transferase</keyword>
<feature type="chain" id="PRO_1000201601" description="Aspartate carbamoyltransferase catalytic subunit">
    <location>
        <begin position="1"/>
        <end position="303"/>
    </location>
</feature>
<feature type="binding site" evidence="1">
    <location>
        <position position="51"/>
    </location>
    <ligand>
        <name>carbamoyl phosphate</name>
        <dbReference type="ChEBI" id="CHEBI:58228"/>
    </ligand>
</feature>
<feature type="binding site" evidence="1">
    <location>
        <position position="52"/>
    </location>
    <ligand>
        <name>carbamoyl phosphate</name>
        <dbReference type="ChEBI" id="CHEBI:58228"/>
    </ligand>
</feature>
<feature type="binding site" evidence="1">
    <location>
        <position position="80"/>
    </location>
    <ligand>
        <name>L-aspartate</name>
        <dbReference type="ChEBI" id="CHEBI:29991"/>
    </ligand>
</feature>
<feature type="binding site" evidence="1">
    <location>
        <position position="101"/>
    </location>
    <ligand>
        <name>carbamoyl phosphate</name>
        <dbReference type="ChEBI" id="CHEBI:58228"/>
    </ligand>
</feature>
<feature type="binding site" evidence="1">
    <location>
        <position position="129"/>
    </location>
    <ligand>
        <name>carbamoyl phosphate</name>
        <dbReference type="ChEBI" id="CHEBI:58228"/>
    </ligand>
</feature>
<feature type="binding site" evidence="1">
    <location>
        <position position="132"/>
    </location>
    <ligand>
        <name>carbamoyl phosphate</name>
        <dbReference type="ChEBI" id="CHEBI:58228"/>
    </ligand>
</feature>
<feature type="binding site" evidence="1">
    <location>
        <position position="162"/>
    </location>
    <ligand>
        <name>L-aspartate</name>
        <dbReference type="ChEBI" id="CHEBI:29991"/>
    </ligand>
</feature>
<feature type="binding site" evidence="1">
    <location>
        <position position="221"/>
    </location>
    <ligand>
        <name>L-aspartate</name>
        <dbReference type="ChEBI" id="CHEBI:29991"/>
    </ligand>
</feature>
<feature type="binding site" evidence="1">
    <location>
        <position position="260"/>
    </location>
    <ligand>
        <name>carbamoyl phosphate</name>
        <dbReference type="ChEBI" id="CHEBI:58228"/>
    </ligand>
</feature>
<feature type="binding site" evidence="1">
    <location>
        <position position="261"/>
    </location>
    <ligand>
        <name>carbamoyl phosphate</name>
        <dbReference type="ChEBI" id="CHEBI:58228"/>
    </ligand>
</feature>
<organism>
    <name type="scientific">Saccharolobus islandicus (strain M.16.27)</name>
    <name type="common">Sulfolobus islandicus</name>
    <dbReference type="NCBI Taxonomy" id="427318"/>
    <lineage>
        <taxon>Archaea</taxon>
        <taxon>Thermoproteota</taxon>
        <taxon>Thermoprotei</taxon>
        <taxon>Sulfolobales</taxon>
        <taxon>Sulfolobaceae</taxon>
        <taxon>Saccharolobus</taxon>
    </lineage>
</organism>
<comment type="function">
    <text evidence="1">Catalyzes the condensation of carbamoyl phosphate and aspartate to form carbamoyl aspartate and inorganic phosphate, the committed step in the de novo pyrimidine nucleotide biosynthesis pathway.</text>
</comment>
<comment type="catalytic activity">
    <reaction evidence="1">
        <text>carbamoyl phosphate + L-aspartate = N-carbamoyl-L-aspartate + phosphate + H(+)</text>
        <dbReference type="Rhea" id="RHEA:20013"/>
        <dbReference type="ChEBI" id="CHEBI:15378"/>
        <dbReference type="ChEBI" id="CHEBI:29991"/>
        <dbReference type="ChEBI" id="CHEBI:32814"/>
        <dbReference type="ChEBI" id="CHEBI:43474"/>
        <dbReference type="ChEBI" id="CHEBI:58228"/>
        <dbReference type="EC" id="2.1.3.2"/>
    </reaction>
</comment>
<comment type="pathway">
    <text evidence="1">Pyrimidine metabolism; UMP biosynthesis via de novo pathway; (S)-dihydroorotate from bicarbonate: step 2/3.</text>
</comment>
<comment type="subunit">
    <text evidence="1">Heterooligomer of catalytic and regulatory chains.</text>
</comment>
<comment type="similarity">
    <text evidence="1">Belongs to the aspartate/ornithine carbamoyltransferase superfamily. ATCase family.</text>
</comment>